<gene>
    <name evidence="1" type="primary">rpsD</name>
    <name type="ordered locus">ACP_1424</name>
</gene>
<protein>
    <recommendedName>
        <fullName evidence="1">Small ribosomal subunit protein uS4</fullName>
    </recommendedName>
    <alternativeName>
        <fullName evidence="2">30S ribosomal protein S4</fullName>
    </alternativeName>
</protein>
<evidence type="ECO:0000255" key="1">
    <source>
        <dbReference type="HAMAP-Rule" id="MF_01306"/>
    </source>
</evidence>
<evidence type="ECO:0000305" key="2"/>
<organism>
    <name type="scientific">Acidobacterium capsulatum (strain ATCC 51196 / DSM 11244 / BCRC 80197 / JCM 7670 / NBRC 15755 / NCIMB 13165 / 161)</name>
    <dbReference type="NCBI Taxonomy" id="240015"/>
    <lineage>
        <taxon>Bacteria</taxon>
        <taxon>Pseudomonadati</taxon>
        <taxon>Acidobacteriota</taxon>
        <taxon>Terriglobia</taxon>
        <taxon>Terriglobales</taxon>
        <taxon>Acidobacteriaceae</taxon>
        <taxon>Acidobacterium</taxon>
    </lineage>
</organism>
<dbReference type="EMBL" id="CP001472">
    <property type="protein sequence ID" value="ACO32123.1"/>
    <property type="molecule type" value="Genomic_DNA"/>
</dbReference>
<dbReference type="RefSeq" id="WP_015896557.1">
    <property type="nucleotide sequence ID" value="NC_012483.1"/>
</dbReference>
<dbReference type="SMR" id="C1F615"/>
<dbReference type="FunCoup" id="C1F615">
    <property type="interactions" value="643"/>
</dbReference>
<dbReference type="STRING" id="240015.ACP_1424"/>
<dbReference type="KEGG" id="aca:ACP_1424"/>
<dbReference type="eggNOG" id="COG0522">
    <property type="taxonomic scope" value="Bacteria"/>
</dbReference>
<dbReference type="HOGENOM" id="CLU_092403_0_2_0"/>
<dbReference type="InParanoid" id="C1F615"/>
<dbReference type="OrthoDB" id="9803672at2"/>
<dbReference type="Proteomes" id="UP000002207">
    <property type="component" value="Chromosome"/>
</dbReference>
<dbReference type="GO" id="GO:0015935">
    <property type="term" value="C:small ribosomal subunit"/>
    <property type="evidence" value="ECO:0007669"/>
    <property type="project" value="InterPro"/>
</dbReference>
<dbReference type="GO" id="GO:0019843">
    <property type="term" value="F:rRNA binding"/>
    <property type="evidence" value="ECO:0007669"/>
    <property type="project" value="UniProtKB-UniRule"/>
</dbReference>
<dbReference type="GO" id="GO:0003735">
    <property type="term" value="F:structural constituent of ribosome"/>
    <property type="evidence" value="ECO:0007669"/>
    <property type="project" value="InterPro"/>
</dbReference>
<dbReference type="GO" id="GO:0042274">
    <property type="term" value="P:ribosomal small subunit biogenesis"/>
    <property type="evidence" value="ECO:0007669"/>
    <property type="project" value="TreeGrafter"/>
</dbReference>
<dbReference type="GO" id="GO:0006412">
    <property type="term" value="P:translation"/>
    <property type="evidence" value="ECO:0007669"/>
    <property type="project" value="UniProtKB-UniRule"/>
</dbReference>
<dbReference type="CDD" id="cd00165">
    <property type="entry name" value="S4"/>
    <property type="match status" value="1"/>
</dbReference>
<dbReference type="FunFam" id="1.10.1050.10:FF:000001">
    <property type="entry name" value="30S ribosomal protein S4"/>
    <property type="match status" value="1"/>
</dbReference>
<dbReference type="FunFam" id="3.10.290.10:FF:000001">
    <property type="entry name" value="30S ribosomal protein S4"/>
    <property type="match status" value="1"/>
</dbReference>
<dbReference type="Gene3D" id="1.10.1050.10">
    <property type="entry name" value="Ribosomal Protein S4 Delta 41, Chain A, domain 1"/>
    <property type="match status" value="1"/>
</dbReference>
<dbReference type="Gene3D" id="3.10.290.10">
    <property type="entry name" value="RNA-binding S4 domain"/>
    <property type="match status" value="1"/>
</dbReference>
<dbReference type="HAMAP" id="MF_01306_B">
    <property type="entry name" value="Ribosomal_uS4_B"/>
    <property type="match status" value="1"/>
</dbReference>
<dbReference type="InterPro" id="IPR022801">
    <property type="entry name" value="Ribosomal_uS4"/>
</dbReference>
<dbReference type="InterPro" id="IPR005709">
    <property type="entry name" value="Ribosomal_uS4_bac-type"/>
</dbReference>
<dbReference type="InterPro" id="IPR001912">
    <property type="entry name" value="Ribosomal_uS4_N"/>
</dbReference>
<dbReference type="InterPro" id="IPR002942">
    <property type="entry name" value="S4_RNA-bd"/>
</dbReference>
<dbReference type="InterPro" id="IPR036986">
    <property type="entry name" value="S4_RNA-bd_sf"/>
</dbReference>
<dbReference type="NCBIfam" id="NF003717">
    <property type="entry name" value="PRK05327.1"/>
    <property type="match status" value="1"/>
</dbReference>
<dbReference type="NCBIfam" id="TIGR01017">
    <property type="entry name" value="rpsD_bact"/>
    <property type="match status" value="1"/>
</dbReference>
<dbReference type="PANTHER" id="PTHR11831">
    <property type="entry name" value="30S 40S RIBOSOMAL PROTEIN"/>
    <property type="match status" value="1"/>
</dbReference>
<dbReference type="PANTHER" id="PTHR11831:SF4">
    <property type="entry name" value="SMALL RIBOSOMAL SUBUNIT PROTEIN US4M"/>
    <property type="match status" value="1"/>
</dbReference>
<dbReference type="Pfam" id="PF00163">
    <property type="entry name" value="Ribosomal_S4"/>
    <property type="match status" value="1"/>
</dbReference>
<dbReference type="Pfam" id="PF01479">
    <property type="entry name" value="S4"/>
    <property type="match status" value="1"/>
</dbReference>
<dbReference type="SMART" id="SM01390">
    <property type="entry name" value="Ribosomal_S4"/>
    <property type="match status" value="1"/>
</dbReference>
<dbReference type="SMART" id="SM00363">
    <property type="entry name" value="S4"/>
    <property type="match status" value="1"/>
</dbReference>
<dbReference type="SUPFAM" id="SSF55174">
    <property type="entry name" value="Alpha-L RNA-binding motif"/>
    <property type="match status" value="1"/>
</dbReference>
<dbReference type="PROSITE" id="PS50889">
    <property type="entry name" value="S4"/>
    <property type="match status" value="1"/>
</dbReference>
<name>RS4_ACIC5</name>
<accession>C1F615</accession>
<feature type="chain" id="PRO_1000165374" description="Small ribosomal subunit protein uS4">
    <location>
        <begin position="1"/>
        <end position="209"/>
    </location>
</feature>
<feature type="domain" description="S4 RNA-binding" evidence="1">
    <location>
        <begin position="99"/>
        <end position="161"/>
    </location>
</feature>
<reference key="1">
    <citation type="journal article" date="2009" name="Appl. Environ. Microbiol.">
        <title>Three genomes from the phylum Acidobacteria provide insight into the lifestyles of these microorganisms in soils.</title>
        <authorList>
            <person name="Ward N.L."/>
            <person name="Challacombe J.F."/>
            <person name="Janssen P.H."/>
            <person name="Henrissat B."/>
            <person name="Coutinho P.M."/>
            <person name="Wu M."/>
            <person name="Xie G."/>
            <person name="Haft D.H."/>
            <person name="Sait M."/>
            <person name="Badger J."/>
            <person name="Barabote R.D."/>
            <person name="Bradley B."/>
            <person name="Brettin T.S."/>
            <person name="Brinkac L.M."/>
            <person name="Bruce D."/>
            <person name="Creasy T."/>
            <person name="Daugherty S.C."/>
            <person name="Davidsen T.M."/>
            <person name="DeBoy R.T."/>
            <person name="Detter J.C."/>
            <person name="Dodson R.J."/>
            <person name="Durkin A.S."/>
            <person name="Ganapathy A."/>
            <person name="Gwinn-Giglio M."/>
            <person name="Han C.S."/>
            <person name="Khouri H."/>
            <person name="Kiss H."/>
            <person name="Kothari S.P."/>
            <person name="Madupu R."/>
            <person name="Nelson K.E."/>
            <person name="Nelson W.C."/>
            <person name="Paulsen I."/>
            <person name="Penn K."/>
            <person name="Ren Q."/>
            <person name="Rosovitz M.J."/>
            <person name="Selengut J.D."/>
            <person name="Shrivastava S."/>
            <person name="Sullivan S.A."/>
            <person name="Tapia R."/>
            <person name="Thompson L.S."/>
            <person name="Watkins K.L."/>
            <person name="Yang Q."/>
            <person name="Yu C."/>
            <person name="Zafar N."/>
            <person name="Zhou L."/>
            <person name="Kuske C.R."/>
        </authorList>
    </citation>
    <scope>NUCLEOTIDE SEQUENCE [LARGE SCALE GENOMIC DNA]</scope>
    <source>
        <strain>ATCC 51196 / DSM 11244 / BCRC 80197 / JCM 7670 / NBRC 15755 / NCIMB 13165 / 161</strain>
    </source>
</reference>
<proteinExistence type="inferred from homology"/>
<sequence length="209" mass="23799">MARYTGPVCRLCRREGMKLFLKGTKCFTDKCAIEKRNFAPGQHGRDRKAKIVGYGLQLREKQKAKRIYFTLEGQFREYYEKASRAPGVTGELLIQQLECRLDNIAFRLGFATSRRQARQIVRHGHVEVNGRKVNIPSFQVKVGDEIKIRPNSSKLVVVEMGRDFASGQPAPAWLQVDHANLSGKVVSLPKREDVNLPVNEQLIVELYSK</sequence>
<comment type="function">
    <text evidence="1">One of the primary rRNA binding proteins, it binds directly to 16S rRNA where it nucleates assembly of the body of the 30S subunit.</text>
</comment>
<comment type="function">
    <text evidence="1">With S5 and S12 plays an important role in translational accuracy.</text>
</comment>
<comment type="subunit">
    <text evidence="1">Part of the 30S ribosomal subunit. Contacts protein S5. The interaction surface between S4 and S5 is involved in control of translational fidelity.</text>
</comment>
<comment type="similarity">
    <text evidence="1">Belongs to the universal ribosomal protein uS4 family.</text>
</comment>
<keyword id="KW-1185">Reference proteome</keyword>
<keyword id="KW-0687">Ribonucleoprotein</keyword>
<keyword id="KW-0689">Ribosomal protein</keyword>
<keyword id="KW-0694">RNA-binding</keyword>
<keyword id="KW-0699">rRNA-binding</keyword>